<sequence length="33" mass="3507">MDLEVIAQLTVLTLMVVSGPLVIVLSAIRKGNL</sequence>
<proteinExistence type="inferred from homology"/>
<reference key="1">
    <citation type="journal article" date="1994" name="Proc. Natl. Acad. Sci. U.S.A.">
        <title>Loss of all ndh genes as determined by sequencing the entire chloroplast genome of the black pine Pinus thunbergii.</title>
        <authorList>
            <person name="Wakasugi T."/>
            <person name="Tsudzuki J."/>
            <person name="Ito S."/>
            <person name="Nakashima K."/>
            <person name="Tsudzuki T."/>
            <person name="Sugiura M."/>
        </authorList>
    </citation>
    <scope>NUCLEOTIDE SEQUENCE [LARGE SCALE GENOMIC DNA]</scope>
</reference>
<organism>
    <name type="scientific">Pinus thunbergii</name>
    <name type="common">Japanese black pine</name>
    <name type="synonym">Pinus thunbergiana</name>
    <dbReference type="NCBI Taxonomy" id="3350"/>
    <lineage>
        <taxon>Eukaryota</taxon>
        <taxon>Viridiplantae</taxon>
        <taxon>Streptophyta</taxon>
        <taxon>Embryophyta</taxon>
        <taxon>Tracheophyta</taxon>
        <taxon>Spermatophyta</taxon>
        <taxon>Pinopsida</taxon>
        <taxon>Pinidae</taxon>
        <taxon>Conifers I</taxon>
        <taxon>Pinales</taxon>
        <taxon>Pinaceae</taxon>
        <taxon>Pinus</taxon>
        <taxon>Pinus subgen. Pinus</taxon>
    </lineage>
</organism>
<protein>
    <recommendedName>
        <fullName evidence="1">Photosystem II reaction center protein Psb30</fullName>
    </recommendedName>
    <alternativeName>
        <fullName evidence="1">Photosystem II reaction center protein Ycf12</fullName>
    </alternativeName>
</protein>
<accession>P41600</accession>
<gene>
    <name evidence="1" type="primary">psb30</name>
    <name evidence="1" type="synonym">ycf12</name>
</gene>
<name>PSB30_PINTH</name>
<comment type="function">
    <text evidence="1">A core subunit of photosystem II (PSII), probably helps stabilize the reaction center.</text>
</comment>
<comment type="subunit">
    <text evidence="1">PSII is composed of 1 copy each of membrane proteins PsbA, PsbB, PsbC, PsbD, PsbE, PsbF, PsbH, PsbI, PsbJ, PsbK, PsbL, PsbM, PsbT, PsbX, PsbY, PsbZ, Psb30/Ycf12, peripheral proteins of the oxygen-evolving complex and a large number of cofactors. It forms dimeric complexes.</text>
</comment>
<comment type="subcellular location">
    <subcellularLocation>
        <location evidence="1">Plastid</location>
        <location evidence="1">Chloroplast thylakoid membrane</location>
        <topology evidence="1">Single-pass membrane protein</topology>
    </subcellularLocation>
</comment>
<comment type="similarity">
    <text evidence="1">Belongs to the Psb30/Ycf12 family.</text>
</comment>
<keyword id="KW-0150">Chloroplast</keyword>
<keyword id="KW-0472">Membrane</keyword>
<keyword id="KW-0602">Photosynthesis</keyword>
<keyword id="KW-0604">Photosystem II</keyword>
<keyword id="KW-0934">Plastid</keyword>
<keyword id="KW-0793">Thylakoid</keyword>
<keyword id="KW-0812">Transmembrane</keyword>
<keyword id="KW-1133">Transmembrane helix</keyword>
<dbReference type="EMBL" id="D17510">
    <property type="protein sequence ID" value="BAA04317.1"/>
    <property type="molecule type" value="Genomic_DNA"/>
</dbReference>
<dbReference type="PIR" id="T07437">
    <property type="entry name" value="T07437"/>
</dbReference>
<dbReference type="RefSeq" id="NP_042358.1">
    <property type="nucleotide sequence ID" value="NC_001631.1"/>
</dbReference>
<dbReference type="SMR" id="P41600"/>
<dbReference type="GO" id="GO:0009535">
    <property type="term" value="C:chloroplast thylakoid membrane"/>
    <property type="evidence" value="ECO:0007669"/>
    <property type="project" value="UniProtKB-SubCell"/>
</dbReference>
<dbReference type="GO" id="GO:0009523">
    <property type="term" value="C:photosystem II"/>
    <property type="evidence" value="ECO:0007669"/>
    <property type="project" value="UniProtKB-KW"/>
</dbReference>
<dbReference type="GO" id="GO:0015979">
    <property type="term" value="P:photosynthesis"/>
    <property type="evidence" value="ECO:0007669"/>
    <property type="project" value="UniProtKB-KW"/>
</dbReference>
<dbReference type="HAMAP" id="MF_01329">
    <property type="entry name" value="PSII_Psb30_Ycf12"/>
    <property type="match status" value="1"/>
</dbReference>
<dbReference type="InterPro" id="IPR010284">
    <property type="entry name" value="PSII_Ycf12_core-subunit"/>
</dbReference>
<dbReference type="NCBIfam" id="NF010239">
    <property type="entry name" value="PRK13686.1"/>
    <property type="match status" value="1"/>
</dbReference>
<dbReference type="Pfam" id="PF05969">
    <property type="entry name" value="PSII_Ycf12"/>
    <property type="match status" value="1"/>
</dbReference>
<feature type="chain" id="PRO_0000059037" description="Photosystem II reaction center protein Psb30">
    <location>
        <begin position="1"/>
        <end position="33"/>
    </location>
</feature>
<feature type="transmembrane region" description="Helical" evidence="1">
    <location>
        <begin position="5"/>
        <end position="25"/>
    </location>
</feature>
<geneLocation type="chloroplast"/>
<evidence type="ECO:0000255" key="1">
    <source>
        <dbReference type="HAMAP-Rule" id="MF_01329"/>
    </source>
</evidence>